<dbReference type="EMBL" id="CP001158">
    <property type="protein sequence ID" value="ACL30292.1"/>
    <property type="molecule type" value="Genomic_DNA"/>
</dbReference>
<dbReference type="RefSeq" id="WP_009874453.1">
    <property type="nucleotide sequence ID" value="NC_011834.1"/>
</dbReference>
<dbReference type="SMR" id="B8D827"/>
<dbReference type="KEGG" id="bau:BUAPTUC7_496"/>
<dbReference type="HOGENOM" id="CLU_103849_1_2_6"/>
<dbReference type="GO" id="GO:0005829">
    <property type="term" value="C:cytosol"/>
    <property type="evidence" value="ECO:0007669"/>
    <property type="project" value="TreeGrafter"/>
</dbReference>
<dbReference type="GO" id="GO:0015935">
    <property type="term" value="C:small ribosomal subunit"/>
    <property type="evidence" value="ECO:0007669"/>
    <property type="project" value="TreeGrafter"/>
</dbReference>
<dbReference type="GO" id="GO:0019843">
    <property type="term" value="F:rRNA binding"/>
    <property type="evidence" value="ECO:0007669"/>
    <property type="project" value="UniProtKB-UniRule"/>
</dbReference>
<dbReference type="GO" id="GO:0003735">
    <property type="term" value="F:structural constituent of ribosome"/>
    <property type="evidence" value="ECO:0007669"/>
    <property type="project" value="InterPro"/>
</dbReference>
<dbReference type="GO" id="GO:0000049">
    <property type="term" value="F:tRNA binding"/>
    <property type="evidence" value="ECO:0007669"/>
    <property type="project" value="UniProtKB-UniRule"/>
</dbReference>
<dbReference type="GO" id="GO:0006412">
    <property type="term" value="P:translation"/>
    <property type="evidence" value="ECO:0007669"/>
    <property type="project" value="UniProtKB-UniRule"/>
</dbReference>
<dbReference type="FunFam" id="1.10.8.50:FF:000001">
    <property type="entry name" value="30S ribosomal protein S13"/>
    <property type="match status" value="1"/>
</dbReference>
<dbReference type="FunFam" id="4.10.910.10:FF:000001">
    <property type="entry name" value="30S ribosomal protein S13"/>
    <property type="match status" value="1"/>
</dbReference>
<dbReference type="Gene3D" id="1.10.8.50">
    <property type="match status" value="1"/>
</dbReference>
<dbReference type="Gene3D" id="4.10.910.10">
    <property type="entry name" value="30s ribosomal protein s13, domain 2"/>
    <property type="match status" value="1"/>
</dbReference>
<dbReference type="HAMAP" id="MF_01315">
    <property type="entry name" value="Ribosomal_uS13"/>
    <property type="match status" value="1"/>
</dbReference>
<dbReference type="InterPro" id="IPR027437">
    <property type="entry name" value="Rbsml_uS13_C"/>
</dbReference>
<dbReference type="InterPro" id="IPR001892">
    <property type="entry name" value="Ribosomal_uS13"/>
</dbReference>
<dbReference type="InterPro" id="IPR010979">
    <property type="entry name" value="Ribosomal_uS13-like_H2TH"/>
</dbReference>
<dbReference type="InterPro" id="IPR019980">
    <property type="entry name" value="Ribosomal_uS13_bac-type"/>
</dbReference>
<dbReference type="InterPro" id="IPR018269">
    <property type="entry name" value="Ribosomal_uS13_CS"/>
</dbReference>
<dbReference type="NCBIfam" id="TIGR03631">
    <property type="entry name" value="uS13_bact"/>
    <property type="match status" value="1"/>
</dbReference>
<dbReference type="PANTHER" id="PTHR10871">
    <property type="entry name" value="30S RIBOSOMAL PROTEIN S13/40S RIBOSOMAL PROTEIN S18"/>
    <property type="match status" value="1"/>
</dbReference>
<dbReference type="PANTHER" id="PTHR10871:SF1">
    <property type="entry name" value="SMALL RIBOSOMAL SUBUNIT PROTEIN US13M"/>
    <property type="match status" value="1"/>
</dbReference>
<dbReference type="Pfam" id="PF00416">
    <property type="entry name" value="Ribosomal_S13"/>
    <property type="match status" value="1"/>
</dbReference>
<dbReference type="PIRSF" id="PIRSF002134">
    <property type="entry name" value="Ribosomal_S13"/>
    <property type="match status" value="1"/>
</dbReference>
<dbReference type="SUPFAM" id="SSF46946">
    <property type="entry name" value="S13-like H2TH domain"/>
    <property type="match status" value="1"/>
</dbReference>
<dbReference type="PROSITE" id="PS00646">
    <property type="entry name" value="RIBOSOMAL_S13_1"/>
    <property type="match status" value="1"/>
</dbReference>
<dbReference type="PROSITE" id="PS50159">
    <property type="entry name" value="RIBOSOMAL_S13_2"/>
    <property type="match status" value="1"/>
</dbReference>
<feature type="chain" id="PRO_1000165607" description="Small ribosomal subunit protein uS13">
    <location>
        <begin position="1"/>
        <end position="118"/>
    </location>
</feature>
<feature type="region of interest" description="Disordered" evidence="2">
    <location>
        <begin position="94"/>
        <end position="118"/>
    </location>
</feature>
<evidence type="ECO:0000255" key="1">
    <source>
        <dbReference type="HAMAP-Rule" id="MF_01315"/>
    </source>
</evidence>
<evidence type="ECO:0000256" key="2">
    <source>
        <dbReference type="SAM" id="MobiDB-lite"/>
    </source>
</evidence>
<evidence type="ECO:0000305" key="3"/>
<organism>
    <name type="scientific">Buchnera aphidicola subsp. Acyrthosiphon pisum (strain Tuc7)</name>
    <dbReference type="NCBI Taxonomy" id="561501"/>
    <lineage>
        <taxon>Bacteria</taxon>
        <taxon>Pseudomonadati</taxon>
        <taxon>Pseudomonadota</taxon>
        <taxon>Gammaproteobacteria</taxon>
        <taxon>Enterobacterales</taxon>
        <taxon>Erwiniaceae</taxon>
        <taxon>Buchnera</taxon>
    </lineage>
</organism>
<sequence>MARIAGINIPENKHTLIALTAIYGIGKKRSKFICSIANIPEHSKIVDLNEEQIDLLRTHVAKYVIEGDLRRERTLNIKRLIDLSCYRGLRHRRSLPVHGQRTKTNARTCKGPRKPIKK</sequence>
<reference key="1">
    <citation type="journal article" date="2009" name="Science">
        <title>The dynamics and time scale of ongoing genomic erosion in symbiotic bacteria.</title>
        <authorList>
            <person name="Moran N.A."/>
            <person name="McLaughlin H.J."/>
            <person name="Sorek R."/>
        </authorList>
    </citation>
    <scope>NUCLEOTIDE SEQUENCE [LARGE SCALE GENOMIC DNA]</scope>
    <source>
        <strain>Tuc7</strain>
    </source>
</reference>
<gene>
    <name evidence="1" type="primary">rpsM</name>
    <name type="ordered locus">BUAPTUC7_496</name>
</gene>
<keyword id="KW-0687">Ribonucleoprotein</keyword>
<keyword id="KW-0689">Ribosomal protein</keyword>
<keyword id="KW-0694">RNA-binding</keyword>
<keyword id="KW-0699">rRNA-binding</keyword>
<keyword id="KW-0820">tRNA-binding</keyword>
<comment type="function">
    <text evidence="1">Located at the top of the head of the 30S subunit, it contacts several helices of the 16S rRNA. In the 70S ribosome it contacts the 23S rRNA (bridge B1a) and protein L5 of the 50S subunit (bridge B1b), connecting the 2 subunits; these bridges are implicated in subunit movement. Contacts the tRNAs in the A and P-sites.</text>
</comment>
<comment type="subunit">
    <text evidence="1">Part of the 30S ribosomal subunit. Forms a loose heterodimer with protein S19. Forms two bridges to the 50S subunit in the 70S ribosome.</text>
</comment>
<comment type="similarity">
    <text evidence="1">Belongs to the universal ribosomal protein uS13 family.</text>
</comment>
<protein>
    <recommendedName>
        <fullName evidence="1">Small ribosomal subunit protein uS13</fullName>
    </recommendedName>
    <alternativeName>
        <fullName evidence="3">30S ribosomal protein S13</fullName>
    </alternativeName>
</protein>
<name>RS13_BUCAT</name>
<proteinExistence type="inferred from homology"/>
<accession>B8D827</accession>